<proteinExistence type="inferred from homology"/>
<dbReference type="EC" id="2.6.99.2" evidence="1"/>
<dbReference type="EMBL" id="CP000527">
    <property type="protein sequence ID" value="ABM28275.1"/>
    <property type="molecule type" value="Genomic_DNA"/>
</dbReference>
<dbReference type="RefSeq" id="WP_010939194.1">
    <property type="nucleotide sequence ID" value="NC_008751.1"/>
</dbReference>
<dbReference type="SMR" id="A1VCV9"/>
<dbReference type="KEGG" id="dvl:Dvul_1256"/>
<dbReference type="HOGENOM" id="CLU_074563_0_0_7"/>
<dbReference type="UniPathway" id="UPA00244">
    <property type="reaction ID" value="UER00313"/>
</dbReference>
<dbReference type="Proteomes" id="UP000009173">
    <property type="component" value="Chromosome"/>
</dbReference>
<dbReference type="GO" id="GO:0005829">
    <property type="term" value="C:cytosol"/>
    <property type="evidence" value="ECO:0007669"/>
    <property type="project" value="TreeGrafter"/>
</dbReference>
<dbReference type="GO" id="GO:0033856">
    <property type="term" value="F:pyridoxine 5'-phosphate synthase activity"/>
    <property type="evidence" value="ECO:0007669"/>
    <property type="project" value="UniProtKB-EC"/>
</dbReference>
<dbReference type="GO" id="GO:0008615">
    <property type="term" value="P:pyridoxine biosynthetic process"/>
    <property type="evidence" value="ECO:0007669"/>
    <property type="project" value="UniProtKB-UniRule"/>
</dbReference>
<dbReference type="CDD" id="cd00003">
    <property type="entry name" value="PNPsynthase"/>
    <property type="match status" value="1"/>
</dbReference>
<dbReference type="Gene3D" id="3.20.20.70">
    <property type="entry name" value="Aldolase class I"/>
    <property type="match status" value="1"/>
</dbReference>
<dbReference type="HAMAP" id="MF_00279">
    <property type="entry name" value="PdxJ"/>
    <property type="match status" value="1"/>
</dbReference>
<dbReference type="InterPro" id="IPR013785">
    <property type="entry name" value="Aldolase_TIM"/>
</dbReference>
<dbReference type="InterPro" id="IPR004569">
    <property type="entry name" value="PyrdxlP_synth_PdxJ"/>
</dbReference>
<dbReference type="InterPro" id="IPR036130">
    <property type="entry name" value="Pyridoxine-5'_phos_synth"/>
</dbReference>
<dbReference type="NCBIfam" id="TIGR00559">
    <property type="entry name" value="pdxJ"/>
    <property type="match status" value="1"/>
</dbReference>
<dbReference type="NCBIfam" id="NF003625">
    <property type="entry name" value="PRK05265.1-3"/>
    <property type="match status" value="1"/>
</dbReference>
<dbReference type="NCBIfam" id="NF003627">
    <property type="entry name" value="PRK05265.1-5"/>
    <property type="match status" value="1"/>
</dbReference>
<dbReference type="PANTHER" id="PTHR30456">
    <property type="entry name" value="PYRIDOXINE 5'-PHOSPHATE SYNTHASE"/>
    <property type="match status" value="1"/>
</dbReference>
<dbReference type="PANTHER" id="PTHR30456:SF0">
    <property type="entry name" value="PYRIDOXINE 5'-PHOSPHATE SYNTHASE"/>
    <property type="match status" value="1"/>
</dbReference>
<dbReference type="Pfam" id="PF03740">
    <property type="entry name" value="PdxJ"/>
    <property type="match status" value="1"/>
</dbReference>
<dbReference type="SUPFAM" id="SSF63892">
    <property type="entry name" value="Pyridoxine 5'-phosphate synthase"/>
    <property type="match status" value="1"/>
</dbReference>
<evidence type="ECO:0000255" key="1">
    <source>
        <dbReference type="HAMAP-Rule" id="MF_00279"/>
    </source>
</evidence>
<accession>A1VCV9</accession>
<comment type="function">
    <text evidence="1">Catalyzes the complicated ring closure reaction between the two acyclic compounds 1-deoxy-D-xylulose-5-phosphate (DXP) and 3-amino-2-oxopropyl phosphate (1-amino-acetone-3-phosphate or AAP) to form pyridoxine 5'-phosphate (PNP) and inorganic phosphate.</text>
</comment>
<comment type="catalytic activity">
    <reaction evidence="1">
        <text>3-amino-2-oxopropyl phosphate + 1-deoxy-D-xylulose 5-phosphate = pyridoxine 5'-phosphate + phosphate + 2 H2O + H(+)</text>
        <dbReference type="Rhea" id="RHEA:15265"/>
        <dbReference type="ChEBI" id="CHEBI:15377"/>
        <dbReference type="ChEBI" id="CHEBI:15378"/>
        <dbReference type="ChEBI" id="CHEBI:43474"/>
        <dbReference type="ChEBI" id="CHEBI:57279"/>
        <dbReference type="ChEBI" id="CHEBI:57792"/>
        <dbReference type="ChEBI" id="CHEBI:58589"/>
        <dbReference type="EC" id="2.6.99.2"/>
    </reaction>
</comment>
<comment type="pathway">
    <text evidence="1">Cofactor biosynthesis; pyridoxine 5'-phosphate biosynthesis; pyridoxine 5'-phosphate from D-erythrose 4-phosphate: step 5/5.</text>
</comment>
<comment type="subunit">
    <text evidence="1">Homooctamer; tetramer of dimers.</text>
</comment>
<comment type="subcellular location">
    <subcellularLocation>
        <location evidence="1">Cytoplasm</location>
    </subcellularLocation>
</comment>
<comment type="similarity">
    <text evidence="1">Belongs to the PNP synthase family.</text>
</comment>
<name>PDXJ_NITV4</name>
<protein>
    <recommendedName>
        <fullName evidence="1">Pyridoxine 5'-phosphate synthase</fullName>
        <shortName evidence="1">PNP synthase</shortName>
        <ecNumber evidence="1">2.6.99.2</ecNumber>
    </recommendedName>
</protein>
<keyword id="KW-0963">Cytoplasm</keyword>
<keyword id="KW-0664">Pyridoxine biosynthesis</keyword>
<keyword id="KW-0808">Transferase</keyword>
<organism>
    <name type="scientific">Nitratidesulfovibrio vulgaris (strain DP4)</name>
    <name type="common">Desulfovibrio vulgaris</name>
    <dbReference type="NCBI Taxonomy" id="391774"/>
    <lineage>
        <taxon>Bacteria</taxon>
        <taxon>Pseudomonadati</taxon>
        <taxon>Thermodesulfobacteriota</taxon>
        <taxon>Desulfovibrionia</taxon>
        <taxon>Desulfovibrionales</taxon>
        <taxon>Desulfovibrionaceae</taxon>
        <taxon>Nitratidesulfovibrio</taxon>
    </lineage>
</organism>
<feature type="chain" id="PRO_1000022371" description="Pyridoxine 5'-phosphate synthase">
    <location>
        <begin position="1"/>
        <end position="241"/>
    </location>
</feature>
<feature type="active site" description="Proton acceptor" evidence="1">
    <location>
        <position position="43"/>
    </location>
</feature>
<feature type="active site" description="Proton acceptor" evidence="1">
    <location>
        <position position="70"/>
    </location>
</feature>
<feature type="active site" description="Proton donor" evidence="1">
    <location>
        <position position="191"/>
    </location>
</feature>
<feature type="binding site" evidence="1">
    <location>
        <position position="7"/>
    </location>
    <ligand>
        <name>3-amino-2-oxopropyl phosphate</name>
        <dbReference type="ChEBI" id="CHEBI:57279"/>
    </ligand>
</feature>
<feature type="binding site" evidence="1">
    <location>
        <begin position="9"/>
        <end position="10"/>
    </location>
    <ligand>
        <name>1-deoxy-D-xylulose 5-phosphate</name>
        <dbReference type="ChEBI" id="CHEBI:57792"/>
    </ligand>
</feature>
<feature type="binding site" evidence="1">
    <location>
        <position position="18"/>
    </location>
    <ligand>
        <name>3-amino-2-oxopropyl phosphate</name>
        <dbReference type="ChEBI" id="CHEBI:57279"/>
    </ligand>
</feature>
<feature type="binding site" evidence="1">
    <location>
        <position position="45"/>
    </location>
    <ligand>
        <name>1-deoxy-D-xylulose 5-phosphate</name>
        <dbReference type="ChEBI" id="CHEBI:57792"/>
    </ligand>
</feature>
<feature type="binding site" evidence="1">
    <location>
        <position position="50"/>
    </location>
    <ligand>
        <name>1-deoxy-D-xylulose 5-phosphate</name>
        <dbReference type="ChEBI" id="CHEBI:57792"/>
    </ligand>
</feature>
<feature type="binding site" evidence="1">
    <location>
        <position position="100"/>
    </location>
    <ligand>
        <name>1-deoxy-D-xylulose 5-phosphate</name>
        <dbReference type="ChEBI" id="CHEBI:57792"/>
    </ligand>
</feature>
<feature type="binding site" evidence="1">
    <location>
        <position position="192"/>
    </location>
    <ligand>
        <name>3-amino-2-oxopropyl phosphate</name>
        <dbReference type="ChEBI" id="CHEBI:57279"/>
    </ligand>
</feature>
<feature type="binding site" evidence="1">
    <location>
        <begin position="213"/>
        <end position="214"/>
    </location>
    <ligand>
        <name>3-amino-2-oxopropyl phosphate</name>
        <dbReference type="ChEBI" id="CHEBI:57279"/>
    </ligand>
</feature>
<feature type="site" description="Transition state stabilizer" evidence="1">
    <location>
        <position position="151"/>
    </location>
</feature>
<gene>
    <name evidence="1" type="primary">pdxJ</name>
    <name type="ordered locus">Dvul_1256</name>
</gene>
<reference key="1">
    <citation type="journal article" date="2009" name="Environ. Microbiol.">
        <title>Contribution of mobile genetic elements to Desulfovibrio vulgaris genome plasticity.</title>
        <authorList>
            <person name="Walker C.B."/>
            <person name="Stolyar S."/>
            <person name="Chivian D."/>
            <person name="Pinel N."/>
            <person name="Gabster J.A."/>
            <person name="Dehal P.S."/>
            <person name="He Z."/>
            <person name="Yang Z.K."/>
            <person name="Yen H.C."/>
            <person name="Zhou J."/>
            <person name="Wall J.D."/>
            <person name="Hazen T.C."/>
            <person name="Arkin A.P."/>
            <person name="Stahl D.A."/>
        </authorList>
    </citation>
    <scope>NUCLEOTIDE SEQUENCE [LARGE SCALE GENOMIC DNA]</scope>
    <source>
        <strain>DP4</strain>
    </source>
</reference>
<sequence>MPILVVNVDHVATLRQQRLGIEPDPVTAAHMAELAGARGIIVHLREDRRHIQDRDVSLLRQTLKTRLHLEMAATEEMQGIALAEKPHMVCLVPEKREELTTEGGLVVAGRVDFLQAYVKPFHEIGIATSLFIEADPDQIRAAARVGVTHVELHTGHFADAPDAAERKRQRDAIVAGIGLARTLGLKVNLGHGLNYDNIFDFEAVPGICEFSIGHSIVSRAVLTGFGPAVRDMVDIINRFPG</sequence>